<gene>
    <name evidence="1" type="primary">rpsG</name>
    <name type="ordered locus">SUB1632</name>
</gene>
<evidence type="ECO:0000255" key="1">
    <source>
        <dbReference type="HAMAP-Rule" id="MF_00480"/>
    </source>
</evidence>
<evidence type="ECO:0000305" key="2"/>
<proteinExistence type="inferred from homology"/>
<dbReference type="EMBL" id="AM946015">
    <property type="protein sequence ID" value="CAR43486.1"/>
    <property type="molecule type" value="Genomic_DNA"/>
</dbReference>
<dbReference type="RefSeq" id="WP_015911931.1">
    <property type="nucleotide sequence ID" value="NC_012004.1"/>
</dbReference>
<dbReference type="SMR" id="B9DVS3"/>
<dbReference type="STRING" id="218495.SUB1632"/>
<dbReference type="GeneID" id="93826959"/>
<dbReference type="KEGG" id="sub:SUB1632"/>
<dbReference type="eggNOG" id="COG0049">
    <property type="taxonomic scope" value="Bacteria"/>
</dbReference>
<dbReference type="HOGENOM" id="CLU_072226_1_1_9"/>
<dbReference type="OrthoDB" id="9807653at2"/>
<dbReference type="Proteomes" id="UP000000449">
    <property type="component" value="Chromosome"/>
</dbReference>
<dbReference type="GO" id="GO:0015935">
    <property type="term" value="C:small ribosomal subunit"/>
    <property type="evidence" value="ECO:0007669"/>
    <property type="project" value="InterPro"/>
</dbReference>
<dbReference type="GO" id="GO:0019843">
    <property type="term" value="F:rRNA binding"/>
    <property type="evidence" value="ECO:0007669"/>
    <property type="project" value="UniProtKB-UniRule"/>
</dbReference>
<dbReference type="GO" id="GO:0003735">
    <property type="term" value="F:structural constituent of ribosome"/>
    <property type="evidence" value="ECO:0007669"/>
    <property type="project" value="InterPro"/>
</dbReference>
<dbReference type="GO" id="GO:0000049">
    <property type="term" value="F:tRNA binding"/>
    <property type="evidence" value="ECO:0007669"/>
    <property type="project" value="UniProtKB-UniRule"/>
</dbReference>
<dbReference type="GO" id="GO:0006412">
    <property type="term" value="P:translation"/>
    <property type="evidence" value="ECO:0007669"/>
    <property type="project" value="UniProtKB-UniRule"/>
</dbReference>
<dbReference type="CDD" id="cd14869">
    <property type="entry name" value="uS7_Bacteria"/>
    <property type="match status" value="1"/>
</dbReference>
<dbReference type="FunFam" id="1.10.455.10:FF:000001">
    <property type="entry name" value="30S ribosomal protein S7"/>
    <property type="match status" value="1"/>
</dbReference>
<dbReference type="Gene3D" id="1.10.455.10">
    <property type="entry name" value="Ribosomal protein S7 domain"/>
    <property type="match status" value="1"/>
</dbReference>
<dbReference type="HAMAP" id="MF_00480_B">
    <property type="entry name" value="Ribosomal_uS7_B"/>
    <property type="match status" value="1"/>
</dbReference>
<dbReference type="InterPro" id="IPR000235">
    <property type="entry name" value="Ribosomal_uS7"/>
</dbReference>
<dbReference type="InterPro" id="IPR005717">
    <property type="entry name" value="Ribosomal_uS7_bac/org-type"/>
</dbReference>
<dbReference type="InterPro" id="IPR020606">
    <property type="entry name" value="Ribosomal_uS7_CS"/>
</dbReference>
<dbReference type="InterPro" id="IPR023798">
    <property type="entry name" value="Ribosomal_uS7_dom"/>
</dbReference>
<dbReference type="InterPro" id="IPR036823">
    <property type="entry name" value="Ribosomal_uS7_dom_sf"/>
</dbReference>
<dbReference type="NCBIfam" id="TIGR01029">
    <property type="entry name" value="rpsG_bact"/>
    <property type="match status" value="1"/>
</dbReference>
<dbReference type="PANTHER" id="PTHR11205">
    <property type="entry name" value="RIBOSOMAL PROTEIN S7"/>
    <property type="match status" value="1"/>
</dbReference>
<dbReference type="Pfam" id="PF00177">
    <property type="entry name" value="Ribosomal_S7"/>
    <property type="match status" value="1"/>
</dbReference>
<dbReference type="PIRSF" id="PIRSF002122">
    <property type="entry name" value="RPS7p_RPS7a_RPS5e_RPS7o"/>
    <property type="match status" value="1"/>
</dbReference>
<dbReference type="SUPFAM" id="SSF47973">
    <property type="entry name" value="Ribosomal protein S7"/>
    <property type="match status" value="1"/>
</dbReference>
<dbReference type="PROSITE" id="PS00052">
    <property type="entry name" value="RIBOSOMAL_S7"/>
    <property type="match status" value="1"/>
</dbReference>
<sequence length="156" mass="17710">MSRKNQAPKREVLPDPLYNSKIVTRLINRVMLDGKRGTAATIVYDAFSTIKEATGNDALEVFETAMENIMPVLEVRARRVGGSNYQVPVEVRPERRTTLGLRWLVNASRARGEHTMKERLAKEIMDAANNTGASVKKREDTHKMAEANRAFAHFRW</sequence>
<comment type="function">
    <text evidence="1">One of the primary rRNA binding proteins, it binds directly to 16S rRNA where it nucleates assembly of the head domain of the 30S subunit. Is located at the subunit interface close to the decoding center, probably blocks exit of the E-site tRNA.</text>
</comment>
<comment type="subunit">
    <text evidence="1">Part of the 30S ribosomal subunit. Contacts proteins S9 and S11.</text>
</comment>
<comment type="similarity">
    <text evidence="1">Belongs to the universal ribosomal protein uS7 family.</text>
</comment>
<name>RS7_STRU0</name>
<accession>B9DVS3</accession>
<reference key="1">
    <citation type="journal article" date="2009" name="BMC Genomics">
        <title>Evidence for niche adaptation in the genome of the bovine pathogen Streptococcus uberis.</title>
        <authorList>
            <person name="Ward P.N."/>
            <person name="Holden M.T.G."/>
            <person name="Leigh J.A."/>
            <person name="Lennard N."/>
            <person name="Bignell A."/>
            <person name="Barron A."/>
            <person name="Clark L."/>
            <person name="Quail M.A."/>
            <person name="Woodward J."/>
            <person name="Barrell B.G."/>
            <person name="Egan S.A."/>
            <person name="Field T.R."/>
            <person name="Maskell D."/>
            <person name="Kehoe M."/>
            <person name="Dowson C.G."/>
            <person name="Chanter N."/>
            <person name="Whatmore A.M."/>
            <person name="Bentley S.D."/>
            <person name="Parkhill J."/>
        </authorList>
    </citation>
    <scope>NUCLEOTIDE SEQUENCE [LARGE SCALE GENOMIC DNA]</scope>
    <source>
        <strain>ATCC BAA-854 / 0140J</strain>
    </source>
</reference>
<feature type="chain" id="PRO_1000135627" description="Small ribosomal subunit protein uS7">
    <location>
        <begin position="1"/>
        <end position="156"/>
    </location>
</feature>
<keyword id="KW-1185">Reference proteome</keyword>
<keyword id="KW-0687">Ribonucleoprotein</keyword>
<keyword id="KW-0689">Ribosomal protein</keyword>
<keyword id="KW-0694">RNA-binding</keyword>
<keyword id="KW-0699">rRNA-binding</keyword>
<keyword id="KW-0820">tRNA-binding</keyword>
<protein>
    <recommendedName>
        <fullName evidence="1">Small ribosomal subunit protein uS7</fullName>
    </recommendedName>
    <alternativeName>
        <fullName evidence="2">30S ribosomal protein S7</fullName>
    </alternativeName>
</protein>
<organism>
    <name type="scientific">Streptococcus uberis (strain ATCC BAA-854 / 0140J)</name>
    <dbReference type="NCBI Taxonomy" id="218495"/>
    <lineage>
        <taxon>Bacteria</taxon>
        <taxon>Bacillati</taxon>
        <taxon>Bacillota</taxon>
        <taxon>Bacilli</taxon>
        <taxon>Lactobacillales</taxon>
        <taxon>Streptococcaceae</taxon>
        <taxon>Streptococcus</taxon>
    </lineage>
</organism>